<proteinExistence type="inferred from homology"/>
<keyword id="KW-1003">Cell membrane</keyword>
<keyword id="KW-0472">Membrane</keyword>
<keyword id="KW-0520">NAD</keyword>
<keyword id="KW-0874">Quinone</keyword>
<keyword id="KW-1278">Translocase</keyword>
<keyword id="KW-0812">Transmembrane</keyword>
<keyword id="KW-1133">Transmembrane helix</keyword>
<evidence type="ECO:0000250" key="1"/>
<evidence type="ECO:0000255" key="2"/>
<evidence type="ECO:0000305" key="3"/>
<sequence>MLELPIISITIFLPLISVLYILLFINQSKKANKLNIYVAMVAMLSSVLTFILTIYILIEFDASNHTYQFVERYTWLDKIGLEFHVGIDGIAIFFVVLTSFLTLICIIGSIFTIKKYIKEYLVCFLLMESFCIGAFTAVNLLLFYLFFEAILVPMYIIIGVWGGDNRIYAALKFFLYTFFGSVFFLLALIYIYSKIHSFDLTYILALTENIPLFAQKILWWTIFIAFAVKIPMIPFHTWLPDAHVQAPTSGSVILAGILLKLGSYGFLRVLLPLLPNVSQEFAIYVIYLSVIAIIYSSLVALAQKDIKQMIAYSSIAHMGYVTIGIFSFTETGISGAIFQMLSHGVVSSSLFLIVGTLYERLHTKEIAKYGGVASKMPVLATFFMITMLSSIGLPSTSGFIGEFLSLLGIYKVNVVAACIAALGIILGAVYMLKLYKEVMLGEITNTEIKHFKDLYRYEILSIAPLILIIIYFGLMPNSILNVFHLSVENLLIKF</sequence>
<protein>
    <recommendedName>
        <fullName>NADH-quinone oxidoreductase subunit M</fullName>
        <ecNumber>7.1.1.-</ecNumber>
    </recommendedName>
    <alternativeName>
        <fullName>NADH dehydrogenase I subunit M</fullName>
    </alternativeName>
    <alternativeName>
        <fullName>NDH-1 subunit M</fullName>
    </alternativeName>
</protein>
<accession>Q68VV6</accession>
<comment type="function">
    <text evidence="1">NDH-1 shuttles electrons from NADH, via FMN and iron-sulfur (Fe-S) centers, to quinones in the respiratory chain. Couples the redox reaction to proton translocation (for every two electrons transferred, four hydrogen ions are translocated across the cytoplasmic membrane), and thus conserves the redox energy in a proton gradient (By similarity).</text>
</comment>
<comment type="catalytic activity">
    <reaction>
        <text>a quinone + NADH + 5 H(+)(in) = a quinol + NAD(+) + 4 H(+)(out)</text>
        <dbReference type="Rhea" id="RHEA:57888"/>
        <dbReference type="ChEBI" id="CHEBI:15378"/>
        <dbReference type="ChEBI" id="CHEBI:24646"/>
        <dbReference type="ChEBI" id="CHEBI:57540"/>
        <dbReference type="ChEBI" id="CHEBI:57945"/>
        <dbReference type="ChEBI" id="CHEBI:132124"/>
    </reaction>
</comment>
<comment type="subcellular location">
    <subcellularLocation>
        <location evidence="3">Cell membrane</location>
        <topology evidence="3">Multi-pass membrane protein</topology>
    </subcellularLocation>
</comment>
<comment type="similarity">
    <text evidence="3">Belongs to the complex I subunit 4 family.</text>
</comment>
<name>NUOM_RICTY</name>
<dbReference type="EC" id="7.1.1.-"/>
<dbReference type="EMBL" id="AE017197">
    <property type="protein sequence ID" value="AAU04236.1"/>
    <property type="molecule type" value="Genomic_DNA"/>
</dbReference>
<dbReference type="RefSeq" id="WP_011191211.1">
    <property type="nucleotide sequence ID" value="NC_006142.1"/>
</dbReference>
<dbReference type="SMR" id="Q68VV6"/>
<dbReference type="KEGG" id="rty:RT0780"/>
<dbReference type="eggNOG" id="COG1008">
    <property type="taxonomic scope" value="Bacteria"/>
</dbReference>
<dbReference type="HOGENOM" id="CLU_007100_4_4_5"/>
<dbReference type="OrthoDB" id="9768329at2"/>
<dbReference type="Proteomes" id="UP000000604">
    <property type="component" value="Chromosome"/>
</dbReference>
<dbReference type="GO" id="GO:0005886">
    <property type="term" value="C:plasma membrane"/>
    <property type="evidence" value="ECO:0007669"/>
    <property type="project" value="UniProtKB-SubCell"/>
</dbReference>
<dbReference type="GO" id="GO:0008137">
    <property type="term" value="F:NADH dehydrogenase (ubiquinone) activity"/>
    <property type="evidence" value="ECO:0007669"/>
    <property type="project" value="InterPro"/>
</dbReference>
<dbReference type="GO" id="GO:0048039">
    <property type="term" value="F:ubiquinone binding"/>
    <property type="evidence" value="ECO:0007669"/>
    <property type="project" value="TreeGrafter"/>
</dbReference>
<dbReference type="GO" id="GO:0042773">
    <property type="term" value="P:ATP synthesis coupled electron transport"/>
    <property type="evidence" value="ECO:0007669"/>
    <property type="project" value="InterPro"/>
</dbReference>
<dbReference type="GO" id="GO:0015990">
    <property type="term" value="P:electron transport coupled proton transport"/>
    <property type="evidence" value="ECO:0007669"/>
    <property type="project" value="TreeGrafter"/>
</dbReference>
<dbReference type="InterPro" id="IPR010227">
    <property type="entry name" value="NADH_Q_OxRdtase_chainM/4"/>
</dbReference>
<dbReference type="InterPro" id="IPR003918">
    <property type="entry name" value="NADH_UbQ_OxRdtase"/>
</dbReference>
<dbReference type="InterPro" id="IPR001750">
    <property type="entry name" value="ND/Mrp_TM"/>
</dbReference>
<dbReference type="NCBIfam" id="TIGR01972">
    <property type="entry name" value="NDH_I_M"/>
    <property type="match status" value="1"/>
</dbReference>
<dbReference type="NCBIfam" id="NF004499">
    <property type="entry name" value="PRK05846.1-3"/>
    <property type="match status" value="1"/>
</dbReference>
<dbReference type="NCBIfam" id="NF004506">
    <property type="entry name" value="PRK05846.2-6"/>
    <property type="match status" value="1"/>
</dbReference>
<dbReference type="PANTHER" id="PTHR43507">
    <property type="entry name" value="NADH-UBIQUINONE OXIDOREDUCTASE CHAIN 4"/>
    <property type="match status" value="1"/>
</dbReference>
<dbReference type="PANTHER" id="PTHR43507:SF1">
    <property type="entry name" value="NADH-UBIQUINONE OXIDOREDUCTASE CHAIN 4"/>
    <property type="match status" value="1"/>
</dbReference>
<dbReference type="Pfam" id="PF00361">
    <property type="entry name" value="Proton_antipo_M"/>
    <property type="match status" value="1"/>
</dbReference>
<dbReference type="PRINTS" id="PR01437">
    <property type="entry name" value="NUOXDRDTASE4"/>
</dbReference>
<organism>
    <name type="scientific">Rickettsia typhi (strain ATCC VR-144 / Wilmington)</name>
    <dbReference type="NCBI Taxonomy" id="257363"/>
    <lineage>
        <taxon>Bacteria</taxon>
        <taxon>Pseudomonadati</taxon>
        <taxon>Pseudomonadota</taxon>
        <taxon>Alphaproteobacteria</taxon>
        <taxon>Rickettsiales</taxon>
        <taxon>Rickettsiaceae</taxon>
        <taxon>Rickettsieae</taxon>
        <taxon>Rickettsia</taxon>
        <taxon>typhus group</taxon>
    </lineage>
</organism>
<gene>
    <name type="primary">nuoM</name>
    <name type="ordered locus">RT0780</name>
</gene>
<feature type="chain" id="PRO_0000274786" description="NADH-quinone oxidoreductase subunit M">
    <location>
        <begin position="1"/>
        <end position="494"/>
    </location>
</feature>
<feature type="transmembrane region" description="Helical" evidence="2">
    <location>
        <begin position="5"/>
        <end position="25"/>
    </location>
</feature>
<feature type="transmembrane region" description="Helical" evidence="2">
    <location>
        <begin position="36"/>
        <end position="58"/>
    </location>
</feature>
<feature type="transmembrane region" description="Helical" evidence="2">
    <location>
        <begin position="90"/>
        <end position="110"/>
    </location>
</feature>
<feature type="transmembrane region" description="Helical" evidence="2">
    <location>
        <begin position="119"/>
        <end position="139"/>
    </location>
</feature>
<feature type="transmembrane region" description="Helical" evidence="2">
    <location>
        <begin position="140"/>
        <end position="160"/>
    </location>
</feature>
<feature type="transmembrane region" description="Helical" evidence="2">
    <location>
        <begin position="173"/>
        <end position="193"/>
    </location>
</feature>
<feature type="transmembrane region" description="Helical" evidence="2">
    <location>
        <begin position="206"/>
        <end position="226"/>
    </location>
</feature>
<feature type="transmembrane region" description="Helical" evidence="2">
    <location>
        <begin position="252"/>
        <end position="272"/>
    </location>
</feature>
<feature type="transmembrane region" description="Helical" evidence="2">
    <location>
        <begin position="281"/>
        <end position="301"/>
    </location>
</feature>
<feature type="transmembrane region" description="Helical" evidence="2">
    <location>
        <begin position="318"/>
        <end position="338"/>
    </location>
</feature>
<feature type="transmembrane region" description="Helical" evidence="2">
    <location>
        <begin position="339"/>
        <end position="359"/>
    </location>
</feature>
<feature type="transmembrane region" description="Helical" evidence="2">
    <location>
        <begin position="376"/>
        <end position="396"/>
    </location>
</feature>
<feature type="transmembrane region" description="Helical" evidence="2">
    <location>
        <begin position="412"/>
        <end position="432"/>
    </location>
</feature>
<feature type="transmembrane region" description="Helical" evidence="2">
    <location>
        <begin position="459"/>
        <end position="479"/>
    </location>
</feature>
<reference key="1">
    <citation type="journal article" date="2004" name="J. Bacteriol.">
        <title>Complete genome sequence of Rickettsia typhi and comparison with sequences of other Rickettsiae.</title>
        <authorList>
            <person name="McLeod M.P."/>
            <person name="Qin X."/>
            <person name="Karpathy S.E."/>
            <person name="Gioia J."/>
            <person name="Highlander S.K."/>
            <person name="Fox G.E."/>
            <person name="McNeill T.Z."/>
            <person name="Jiang H."/>
            <person name="Muzny D."/>
            <person name="Jacob L.S."/>
            <person name="Hawes A.C."/>
            <person name="Sodergren E."/>
            <person name="Gill R."/>
            <person name="Hume J."/>
            <person name="Morgan M."/>
            <person name="Fan G."/>
            <person name="Amin A.G."/>
            <person name="Gibbs R.A."/>
            <person name="Hong C."/>
            <person name="Yu X.-J."/>
            <person name="Walker D.H."/>
            <person name="Weinstock G.M."/>
        </authorList>
    </citation>
    <scope>NUCLEOTIDE SEQUENCE [LARGE SCALE GENOMIC DNA]</scope>
    <source>
        <strain>ATCC VR-144 / Wilmington</strain>
    </source>
</reference>